<sequence>MQVSVETTQGLGRRVTITIAADSIETAVKSELVNVAKKVRIDGFRKGKVPMNIVAQRYGASVRQDVLGDLMSRNFVDAIIKEKINPAGAPNYVPGEYKVGEDFTYSVEFEVYPEVELTGLESIEVEKPVVEVTDADVDVMLDTLRKQQATWKEKDGAADAEDRVTIDFTGSVDGEEFEGGKATDFVLAMGQGRMIPGFEDGVKGHKAGEEFTIDVTFPEEYHAENLKGKAAKFVINLKKVEERELPELTEEFIKRFGVEDGSVAGLRAEVRKNMERELKGAVRNRVKSQAIEGLVKANDIDVPSALIDSEIDVLRRQAAQRFGGNEKQALELPRELFEEQAKRRVVVGLLLGEVIRTNELKADEERVKGLIEEMASAYEDPKEVIEFYSKNKELMDNMRNVALEEQAVEAVLAKAKVSEKATSFNELMNQQA</sequence>
<gene>
    <name evidence="1" type="primary">tig</name>
    <name type="ordered locus">STY0489</name>
    <name type="ordered locus">t2413</name>
</gene>
<protein>
    <recommendedName>
        <fullName evidence="1">Trigger factor</fullName>
        <shortName evidence="1">TF</shortName>
        <ecNumber evidence="1">5.2.1.8</ecNumber>
    </recommendedName>
    <alternativeName>
        <fullName evidence="1">PPIase</fullName>
    </alternativeName>
</protein>
<dbReference type="EC" id="5.2.1.8" evidence="1"/>
<dbReference type="EMBL" id="AL513382">
    <property type="protein sequence ID" value="CAD08906.1"/>
    <property type="molecule type" value="Genomic_DNA"/>
</dbReference>
<dbReference type="EMBL" id="AE014613">
    <property type="protein sequence ID" value="AAO70003.1"/>
    <property type="molecule type" value="Genomic_DNA"/>
</dbReference>
<dbReference type="RefSeq" id="NP_455044.1">
    <property type="nucleotide sequence ID" value="NC_003198.1"/>
</dbReference>
<dbReference type="RefSeq" id="WP_001198406.1">
    <property type="nucleotide sequence ID" value="NZ_WSUR01000026.1"/>
</dbReference>
<dbReference type="SMR" id="P66933"/>
<dbReference type="STRING" id="220341.gene:17584511"/>
<dbReference type="KEGG" id="stt:t2413"/>
<dbReference type="KEGG" id="sty:STY0489"/>
<dbReference type="PATRIC" id="fig|220341.7.peg.491"/>
<dbReference type="eggNOG" id="COG0544">
    <property type="taxonomic scope" value="Bacteria"/>
</dbReference>
<dbReference type="HOGENOM" id="CLU_033058_2_0_6"/>
<dbReference type="OMA" id="KGIKTQF"/>
<dbReference type="OrthoDB" id="9767721at2"/>
<dbReference type="Proteomes" id="UP000000541">
    <property type="component" value="Chromosome"/>
</dbReference>
<dbReference type="Proteomes" id="UP000002670">
    <property type="component" value="Chromosome"/>
</dbReference>
<dbReference type="GO" id="GO:0005737">
    <property type="term" value="C:cytoplasm"/>
    <property type="evidence" value="ECO:0007669"/>
    <property type="project" value="UniProtKB-SubCell"/>
</dbReference>
<dbReference type="GO" id="GO:0003755">
    <property type="term" value="F:peptidyl-prolyl cis-trans isomerase activity"/>
    <property type="evidence" value="ECO:0007669"/>
    <property type="project" value="UniProtKB-UniRule"/>
</dbReference>
<dbReference type="GO" id="GO:0044183">
    <property type="term" value="F:protein folding chaperone"/>
    <property type="evidence" value="ECO:0007669"/>
    <property type="project" value="TreeGrafter"/>
</dbReference>
<dbReference type="GO" id="GO:0043022">
    <property type="term" value="F:ribosome binding"/>
    <property type="evidence" value="ECO:0007669"/>
    <property type="project" value="TreeGrafter"/>
</dbReference>
<dbReference type="GO" id="GO:0051083">
    <property type="term" value="P:'de novo' cotranslational protein folding"/>
    <property type="evidence" value="ECO:0007669"/>
    <property type="project" value="TreeGrafter"/>
</dbReference>
<dbReference type="GO" id="GO:0051301">
    <property type="term" value="P:cell division"/>
    <property type="evidence" value="ECO:0007669"/>
    <property type="project" value="UniProtKB-KW"/>
</dbReference>
<dbReference type="GO" id="GO:0061077">
    <property type="term" value="P:chaperone-mediated protein folding"/>
    <property type="evidence" value="ECO:0007669"/>
    <property type="project" value="TreeGrafter"/>
</dbReference>
<dbReference type="GO" id="GO:0015031">
    <property type="term" value="P:protein transport"/>
    <property type="evidence" value="ECO:0007669"/>
    <property type="project" value="UniProtKB-UniRule"/>
</dbReference>
<dbReference type="GO" id="GO:0043335">
    <property type="term" value="P:protein unfolding"/>
    <property type="evidence" value="ECO:0007669"/>
    <property type="project" value="TreeGrafter"/>
</dbReference>
<dbReference type="FunFam" id="1.10.3120.10:FF:000001">
    <property type="entry name" value="Trigger factor"/>
    <property type="match status" value="1"/>
</dbReference>
<dbReference type="FunFam" id="3.10.50.40:FF:000001">
    <property type="entry name" value="Trigger factor"/>
    <property type="match status" value="1"/>
</dbReference>
<dbReference type="FunFam" id="3.30.70.1050:FF:000001">
    <property type="entry name" value="Trigger factor"/>
    <property type="match status" value="1"/>
</dbReference>
<dbReference type="Gene3D" id="3.10.50.40">
    <property type="match status" value="1"/>
</dbReference>
<dbReference type="Gene3D" id="3.30.70.1050">
    <property type="entry name" value="Trigger factor ribosome-binding domain"/>
    <property type="match status" value="1"/>
</dbReference>
<dbReference type="Gene3D" id="1.10.3120.10">
    <property type="entry name" value="Trigger factor, C-terminal domain"/>
    <property type="match status" value="1"/>
</dbReference>
<dbReference type="HAMAP" id="MF_00303">
    <property type="entry name" value="Trigger_factor_Tig"/>
    <property type="match status" value="1"/>
</dbReference>
<dbReference type="InterPro" id="IPR046357">
    <property type="entry name" value="PPIase_dom_sf"/>
</dbReference>
<dbReference type="InterPro" id="IPR001179">
    <property type="entry name" value="PPIase_FKBP_dom"/>
</dbReference>
<dbReference type="InterPro" id="IPR005215">
    <property type="entry name" value="Trig_fac"/>
</dbReference>
<dbReference type="InterPro" id="IPR008880">
    <property type="entry name" value="Trigger_fac_C"/>
</dbReference>
<dbReference type="InterPro" id="IPR037041">
    <property type="entry name" value="Trigger_fac_C_sf"/>
</dbReference>
<dbReference type="InterPro" id="IPR008881">
    <property type="entry name" value="Trigger_fac_ribosome-bd_bac"/>
</dbReference>
<dbReference type="InterPro" id="IPR036611">
    <property type="entry name" value="Trigger_fac_ribosome-bd_sf"/>
</dbReference>
<dbReference type="InterPro" id="IPR027304">
    <property type="entry name" value="Trigger_fact/SurA_dom_sf"/>
</dbReference>
<dbReference type="NCBIfam" id="TIGR00115">
    <property type="entry name" value="tig"/>
    <property type="match status" value="1"/>
</dbReference>
<dbReference type="PANTHER" id="PTHR30560">
    <property type="entry name" value="TRIGGER FACTOR CHAPERONE AND PEPTIDYL-PROLYL CIS/TRANS ISOMERASE"/>
    <property type="match status" value="1"/>
</dbReference>
<dbReference type="PANTHER" id="PTHR30560:SF3">
    <property type="entry name" value="TRIGGER FACTOR-LIKE PROTEIN TIG, CHLOROPLASTIC"/>
    <property type="match status" value="1"/>
</dbReference>
<dbReference type="Pfam" id="PF00254">
    <property type="entry name" value="FKBP_C"/>
    <property type="match status" value="1"/>
</dbReference>
<dbReference type="Pfam" id="PF05698">
    <property type="entry name" value="Trigger_C"/>
    <property type="match status" value="1"/>
</dbReference>
<dbReference type="Pfam" id="PF05697">
    <property type="entry name" value="Trigger_N"/>
    <property type="match status" value="1"/>
</dbReference>
<dbReference type="PIRSF" id="PIRSF003095">
    <property type="entry name" value="Trigger_factor"/>
    <property type="match status" value="1"/>
</dbReference>
<dbReference type="SUPFAM" id="SSF54534">
    <property type="entry name" value="FKBP-like"/>
    <property type="match status" value="1"/>
</dbReference>
<dbReference type="SUPFAM" id="SSF109998">
    <property type="entry name" value="Triger factor/SurA peptide-binding domain-like"/>
    <property type="match status" value="1"/>
</dbReference>
<dbReference type="SUPFAM" id="SSF102735">
    <property type="entry name" value="Trigger factor ribosome-binding domain"/>
    <property type="match status" value="1"/>
</dbReference>
<dbReference type="PROSITE" id="PS50059">
    <property type="entry name" value="FKBP_PPIASE"/>
    <property type="match status" value="1"/>
</dbReference>
<feature type="chain" id="PRO_0000179420" description="Trigger factor">
    <location>
        <begin position="1"/>
        <end position="432"/>
    </location>
</feature>
<feature type="domain" description="PPIase FKBP-type" evidence="1">
    <location>
        <begin position="161"/>
        <end position="246"/>
    </location>
</feature>
<reference key="1">
    <citation type="journal article" date="2001" name="Nature">
        <title>Complete genome sequence of a multiple drug resistant Salmonella enterica serovar Typhi CT18.</title>
        <authorList>
            <person name="Parkhill J."/>
            <person name="Dougan G."/>
            <person name="James K.D."/>
            <person name="Thomson N.R."/>
            <person name="Pickard D."/>
            <person name="Wain J."/>
            <person name="Churcher C.M."/>
            <person name="Mungall K.L."/>
            <person name="Bentley S.D."/>
            <person name="Holden M.T.G."/>
            <person name="Sebaihia M."/>
            <person name="Baker S."/>
            <person name="Basham D."/>
            <person name="Brooks K."/>
            <person name="Chillingworth T."/>
            <person name="Connerton P."/>
            <person name="Cronin A."/>
            <person name="Davis P."/>
            <person name="Davies R.M."/>
            <person name="Dowd L."/>
            <person name="White N."/>
            <person name="Farrar J."/>
            <person name="Feltwell T."/>
            <person name="Hamlin N."/>
            <person name="Haque A."/>
            <person name="Hien T.T."/>
            <person name="Holroyd S."/>
            <person name="Jagels K."/>
            <person name="Krogh A."/>
            <person name="Larsen T.S."/>
            <person name="Leather S."/>
            <person name="Moule S."/>
            <person name="O'Gaora P."/>
            <person name="Parry C."/>
            <person name="Quail M.A."/>
            <person name="Rutherford K.M."/>
            <person name="Simmonds M."/>
            <person name="Skelton J."/>
            <person name="Stevens K."/>
            <person name="Whitehead S."/>
            <person name="Barrell B.G."/>
        </authorList>
    </citation>
    <scope>NUCLEOTIDE SEQUENCE [LARGE SCALE GENOMIC DNA]</scope>
    <source>
        <strain>CT18</strain>
    </source>
</reference>
<reference key="2">
    <citation type="journal article" date="2003" name="J. Bacteriol.">
        <title>Comparative genomics of Salmonella enterica serovar Typhi strains Ty2 and CT18.</title>
        <authorList>
            <person name="Deng W."/>
            <person name="Liou S.-R."/>
            <person name="Plunkett G. III"/>
            <person name="Mayhew G.F."/>
            <person name="Rose D.J."/>
            <person name="Burland V."/>
            <person name="Kodoyianni V."/>
            <person name="Schwartz D.C."/>
            <person name="Blattner F.R."/>
        </authorList>
    </citation>
    <scope>NUCLEOTIDE SEQUENCE [LARGE SCALE GENOMIC DNA]</scope>
    <source>
        <strain>ATCC 700931 / Ty2</strain>
    </source>
</reference>
<name>TIG_SALTI</name>
<proteinExistence type="inferred from homology"/>
<comment type="function">
    <text evidence="1">Involved in protein export. Acts as a chaperone by maintaining the newly synthesized protein in an open conformation. Functions as a peptidyl-prolyl cis-trans isomerase.</text>
</comment>
<comment type="catalytic activity">
    <reaction evidence="1">
        <text>[protein]-peptidylproline (omega=180) = [protein]-peptidylproline (omega=0)</text>
        <dbReference type="Rhea" id="RHEA:16237"/>
        <dbReference type="Rhea" id="RHEA-COMP:10747"/>
        <dbReference type="Rhea" id="RHEA-COMP:10748"/>
        <dbReference type="ChEBI" id="CHEBI:83833"/>
        <dbReference type="ChEBI" id="CHEBI:83834"/>
        <dbReference type="EC" id="5.2.1.8"/>
    </reaction>
</comment>
<comment type="subcellular location">
    <subcellularLocation>
        <location>Cytoplasm</location>
    </subcellularLocation>
    <text evidence="1">About half TF is bound to the ribosome near the polypeptide exit tunnel while the other half is free in the cytoplasm.</text>
</comment>
<comment type="domain">
    <text evidence="1">Consists of 3 domains; the N-terminus binds the ribosome, the middle domain has PPIase activity, while the C-terminus has intrinsic chaperone activity on its own.</text>
</comment>
<comment type="similarity">
    <text evidence="1">Belongs to the FKBP-type PPIase family. Tig subfamily.</text>
</comment>
<evidence type="ECO:0000255" key="1">
    <source>
        <dbReference type="HAMAP-Rule" id="MF_00303"/>
    </source>
</evidence>
<accession>P66933</accession>
<accession>Q8XFC4</accession>
<organism>
    <name type="scientific">Salmonella typhi</name>
    <dbReference type="NCBI Taxonomy" id="90370"/>
    <lineage>
        <taxon>Bacteria</taxon>
        <taxon>Pseudomonadati</taxon>
        <taxon>Pseudomonadota</taxon>
        <taxon>Gammaproteobacteria</taxon>
        <taxon>Enterobacterales</taxon>
        <taxon>Enterobacteriaceae</taxon>
        <taxon>Salmonella</taxon>
    </lineage>
</organism>
<keyword id="KW-0131">Cell cycle</keyword>
<keyword id="KW-0132">Cell division</keyword>
<keyword id="KW-0143">Chaperone</keyword>
<keyword id="KW-0963">Cytoplasm</keyword>
<keyword id="KW-0413">Isomerase</keyword>
<keyword id="KW-0697">Rotamase</keyword>